<sequence length="43" mass="4831">METATVFSIFISCLLLSLTGYSLYTAFGEPSAELRDPFEEHED</sequence>
<reference key="1">
    <citation type="submission" date="2002-02" db="EMBL/GenBank/DDBJ databases">
        <title>psbB gene cluster in Charophyceae.</title>
        <authorList>
            <person name="Lee J."/>
            <person name="Manhart J.R."/>
        </authorList>
    </citation>
    <scope>NUCLEOTIDE SEQUENCE [GENOMIC DNA]</scope>
</reference>
<reference key="2">
    <citation type="journal article" date="2007" name="BMC Biol.">
        <title>A clade uniting the green algae Mesostigma viride and Chlorokybus atmophyticus represents the deepest branch of the Streptophyta in chloroplast genome-based phylogenies.</title>
        <authorList>
            <person name="Lemieux C."/>
            <person name="Otis C."/>
            <person name="Turmel M."/>
        </authorList>
    </citation>
    <scope>NUCLEOTIDE SEQUENCE [LARGE SCALE GENOMIC DNA]</scope>
    <source>
        <strain>SAG 48.80</strain>
    </source>
</reference>
<keyword id="KW-0150">Chloroplast</keyword>
<keyword id="KW-0472">Membrane</keyword>
<keyword id="KW-0934">Plastid</keyword>
<keyword id="KW-0793">Thylakoid</keyword>
<keyword id="KW-0812">Transmembrane</keyword>
<keyword id="KW-1133">Transmembrane helix</keyword>
<dbReference type="EMBL" id="AF482499">
    <property type="protein sequence ID" value="AAQ05917.1"/>
    <property type="molecule type" value="Genomic_DNA"/>
</dbReference>
<dbReference type="EMBL" id="DQ422812">
    <property type="protein sequence ID" value="ABD62223.2"/>
    <property type="molecule type" value="Genomic_DNA"/>
</dbReference>
<dbReference type="RefSeq" id="YP_001019075.1">
    <property type="nucleotide sequence ID" value="NC_008822.1"/>
</dbReference>
<dbReference type="SMR" id="Q71KP0"/>
<dbReference type="GeneID" id="4783184"/>
<dbReference type="GO" id="GO:0009535">
    <property type="term" value="C:chloroplast thylakoid membrane"/>
    <property type="evidence" value="ECO:0007669"/>
    <property type="project" value="UniProtKB-SubCell"/>
</dbReference>
<dbReference type="GO" id="GO:0015979">
    <property type="term" value="P:photosynthesis"/>
    <property type="evidence" value="ECO:0007669"/>
    <property type="project" value="InterPro"/>
</dbReference>
<dbReference type="HAMAP" id="MF_00293">
    <property type="entry name" value="PSII_PsbN"/>
    <property type="match status" value="1"/>
</dbReference>
<dbReference type="InterPro" id="IPR003398">
    <property type="entry name" value="PSII_PsbN"/>
</dbReference>
<dbReference type="PANTHER" id="PTHR35326">
    <property type="entry name" value="PROTEIN PSBN"/>
    <property type="match status" value="1"/>
</dbReference>
<dbReference type="PANTHER" id="PTHR35326:SF3">
    <property type="entry name" value="PROTEIN PSBN"/>
    <property type="match status" value="1"/>
</dbReference>
<dbReference type="Pfam" id="PF02468">
    <property type="entry name" value="PsbN"/>
    <property type="match status" value="1"/>
</dbReference>
<evidence type="ECO:0000255" key="1">
    <source>
        <dbReference type="HAMAP-Rule" id="MF_00293"/>
    </source>
</evidence>
<organism>
    <name type="scientific">Chlorokybus atmophyticus</name>
    <name type="common">Soil alga</name>
    <dbReference type="NCBI Taxonomy" id="3144"/>
    <lineage>
        <taxon>Eukaryota</taxon>
        <taxon>Viridiplantae</taxon>
        <taxon>Streptophyta</taxon>
        <taxon>Chlorokybophyceae</taxon>
        <taxon>Chlorokybales</taxon>
        <taxon>Chlorokybaceae</taxon>
        <taxon>Chlorokybus</taxon>
    </lineage>
</organism>
<proteinExistence type="inferred from homology"/>
<accession>Q71KP0</accession>
<accession>Q19VC0</accession>
<gene>
    <name evidence="1" type="primary">psbN</name>
</gene>
<comment type="function">
    <text evidence="1">May play a role in photosystem I and II biogenesis.</text>
</comment>
<comment type="subcellular location">
    <subcellularLocation>
        <location evidence="1">Plastid</location>
        <location evidence="1">Chloroplast thylakoid membrane</location>
        <topology evidence="1">Single-pass membrane protein</topology>
    </subcellularLocation>
</comment>
<comment type="similarity">
    <text evidence="1">Belongs to the PsbN family.</text>
</comment>
<comment type="caution">
    <text evidence="1">Originally thought to be a component of PSII; based on experiments in Synechocystis, N.tabacum and barley, and its absence from PSII in T.elongatus and T.vulcanus, this is probably not true.</text>
</comment>
<feature type="chain" id="PRO_0000362183" description="Protein PsbN">
    <location>
        <begin position="1"/>
        <end position="43"/>
    </location>
</feature>
<feature type="transmembrane region" description="Helical" evidence="1">
    <location>
        <begin position="5"/>
        <end position="27"/>
    </location>
</feature>
<geneLocation type="chloroplast"/>
<name>PSBN_CHLAT</name>
<protein>
    <recommendedName>
        <fullName evidence="1">Protein PsbN</fullName>
    </recommendedName>
</protein>